<name>FRS4_ARATH</name>
<sequence>MEFETHEDAYLFYKDYAKSVGFGTAKLSSRRSRASKEFIDAKFSCIRYGSKQQSDDAINPRASPKIGCKASMHVKRRPDGKWYVYSFVKEHNHDLLPEQAHYFRSHRNTELVKSNDSRLRRKKNTPLTDCKHLSAYHDLDFIDGYMRNQHDKGRRLVLDTGDAEILLEFLMRMQEENPKFFFAVDFSEDHLLRNVFWVDAKGIEDYKSFSDVVSFETSYFVSKYKVPLVLFVGVNHHVQPVLLGCGLLADDTVYTYVWLMQSWLVAMGGQKPKVMLTDQNNAIKAAIAAVLPETRHCYCLWHVLDQLPRNLDYWSMWQDTFMKKLFKCIYRSWSEEEFDRRWLKLIDKFHLRDVPWMRSLYEERKFWAPTFMRGITFAGLSMRCRSESVNSLFDRYVHPETSLKEFLEGYGLMLEDRYEEEAKADFDAWHEAPELKSPSPFEKQMLLVYSHEIFRRFQLEVLGAAACHLTKESEEGTTYSVKDFDDEQKYLVDWDEFKSDIYCSCRSFEYKGYLCRHAIVVLQMSGVFTIPINYVLQRWTNAARNRHQISRNLELVQSNIRRFNDLCRRAIILGEEGSLSQESYDIAMFAMKEAFKQCAVTINTIKHPARCEEAAIQAGDPVQEENQYGSTSTQIGPEPNIHAGNVPWQAETRREKRSSLNNTSKKAKHVAQSETVGEGSQEGFQHVADPRQSQAVLAGQFHNTMPGVFQNLINTNFQNIPATNMHQNNPPG</sequence>
<organism>
    <name type="scientific">Arabidopsis thaliana</name>
    <name type="common">Mouse-ear cress</name>
    <dbReference type="NCBI Taxonomy" id="3702"/>
    <lineage>
        <taxon>Eukaryota</taxon>
        <taxon>Viridiplantae</taxon>
        <taxon>Streptophyta</taxon>
        <taxon>Embryophyta</taxon>
        <taxon>Tracheophyta</taxon>
        <taxon>Spermatophyta</taxon>
        <taxon>Magnoliopsida</taxon>
        <taxon>eudicotyledons</taxon>
        <taxon>Gunneridae</taxon>
        <taxon>Pentapetalae</taxon>
        <taxon>rosids</taxon>
        <taxon>malvids</taxon>
        <taxon>Brassicales</taxon>
        <taxon>Brassicaceae</taxon>
        <taxon>Camelineae</taxon>
        <taxon>Arabidopsis</taxon>
    </lineage>
</organism>
<gene>
    <name type="primary">FRS4</name>
    <name type="ordered locus">At1g76320</name>
    <name type="ORF">F15M4.18</name>
    <name type="ORF">T23E18.25</name>
</gene>
<reference key="1">
    <citation type="journal article" date="2000" name="Nature">
        <title>Sequence and analysis of chromosome 1 of the plant Arabidopsis thaliana.</title>
        <authorList>
            <person name="Theologis A."/>
            <person name="Ecker J.R."/>
            <person name="Palm C.J."/>
            <person name="Federspiel N.A."/>
            <person name="Kaul S."/>
            <person name="White O."/>
            <person name="Alonso J."/>
            <person name="Altafi H."/>
            <person name="Araujo R."/>
            <person name="Bowman C.L."/>
            <person name="Brooks S.Y."/>
            <person name="Buehler E."/>
            <person name="Chan A."/>
            <person name="Chao Q."/>
            <person name="Chen H."/>
            <person name="Cheuk R.F."/>
            <person name="Chin C.W."/>
            <person name="Chung M.K."/>
            <person name="Conn L."/>
            <person name="Conway A.B."/>
            <person name="Conway A.R."/>
            <person name="Creasy T.H."/>
            <person name="Dewar K."/>
            <person name="Dunn P."/>
            <person name="Etgu P."/>
            <person name="Feldblyum T.V."/>
            <person name="Feng J.-D."/>
            <person name="Fong B."/>
            <person name="Fujii C.Y."/>
            <person name="Gill J.E."/>
            <person name="Goldsmith A.D."/>
            <person name="Haas B."/>
            <person name="Hansen N.F."/>
            <person name="Hughes B."/>
            <person name="Huizar L."/>
            <person name="Hunter J.L."/>
            <person name="Jenkins J."/>
            <person name="Johnson-Hopson C."/>
            <person name="Khan S."/>
            <person name="Khaykin E."/>
            <person name="Kim C.J."/>
            <person name="Koo H.L."/>
            <person name="Kremenetskaia I."/>
            <person name="Kurtz D.B."/>
            <person name="Kwan A."/>
            <person name="Lam B."/>
            <person name="Langin-Hooper S."/>
            <person name="Lee A."/>
            <person name="Lee J.M."/>
            <person name="Lenz C.A."/>
            <person name="Li J.H."/>
            <person name="Li Y.-P."/>
            <person name="Lin X."/>
            <person name="Liu S.X."/>
            <person name="Liu Z.A."/>
            <person name="Luros J.S."/>
            <person name="Maiti R."/>
            <person name="Marziali A."/>
            <person name="Militscher J."/>
            <person name="Miranda M."/>
            <person name="Nguyen M."/>
            <person name="Nierman W.C."/>
            <person name="Osborne B.I."/>
            <person name="Pai G."/>
            <person name="Peterson J."/>
            <person name="Pham P.K."/>
            <person name="Rizzo M."/>
            <person name="Rooney T."/>
            <person name="Rowley D."/>
            <person name="Sakano H."/>
            <person name="Salzberg S.L."/>
            <person name="Schwartz J.R."/>
            <person name="Shinn P."/>
            <person name="Southwick A.M."/>
            <person name="Sun H."/>
            <person name="Tallon L.J."/>
            <person name="Tambunga G."/>
            <person name="Toriumi M.J."/>
            <person name="Town C.D."/>
            <person name="Utterback T."/>
            <person name="Van Aken S."/>
            <person name="Vaysberg M."/>
            <person name="Vysotskaia V.S."/>
            <person name="Walker M."/>
            <person name="Wu D."/>
            <person name="Yu G."/>
            <person name="Fraser C.M."/>
            <person name="Venter J.C."/>
            <person name="Davis R.W."/>
        </authorList>
    </citation>
    <scope>NUCLEOTIDE SEQUENCE [LARGE SCALE GENOMIC DNA]</scope>
    <source>
        <strain>cv. Columbia</strain>
    </source>
</reference>
<reference key="2">
    <citation type="journal article" date="2017" name="Plant J.">
        <title>Araport11: a complete reannotation of the Arabidopsis thaliana reference genome.</title>
        <authorList>
            <person name="Cheng C.Y."/>
            <person name="Krishnakumar V."/>
            <person name="Chan A.P."/>
            <person name="Thibaud-Nissen F."/>
            <person name="Schobel S."/>
            <person name="Town C.D."/>
        </authorList>
    </citation>
    <scope>GENOME REANNOTATION</scope>
    <source>
        <strain>cv. Columbia</strain>
    </source>
</reference>
<reference key="3">
    <citation type="journal article" date="2003" name="Science">
        <title>Empirical analysis of transcriptional activity in the Arabidopsis genome.</title>
        <authorList>
            <person name="Yamada K."/>
            <person name="Lim J."/>
            <person name="Dale J.M."/>
            <person name="Chen H."/>
            <person name="Shinn P."/>
            <person name="Palm C.J."/>
            <person name="Southwick A.M."/>
            <person name="Wu H.C."/>
            <person name="Kim C.J."/>
            <person name="Nguyen M."/>
            <person name="Pham P.K."/>
            <person name="Cheuk R.F."/>
            <person name="Karlin-Newmann G."/>
            <person name="Liu S.X."/>
            <person name="Lam B."/>
            <person name="Sakano H."/>
            <person name="Wu T."/>
            <person name="Yu G."/>
            <person name="Miranda M."/>
            <person name="Quach H.L."/>
            <person name="Tripp M."/>
            <person name="Chang C.H."/>
            <person name="Lee J.M."/>
            <person name="Toriumi M.J."/>
            <person name="Chan M.M."/>
            <person name="Tang C.C."/>
            <person name="Onodera C.S."/>
            <person name="Deng J.M."/>
            <person name="Akiyama K."/>
            <person name="Ansari Y."/>
            <person name="Arakawa T."/>
            <person name="Banh J."/>
            <person name="Banno F."/>
            <person name="Bowser L."/>
            <person name="Brooks S.Y."/>
            <person name="Carninci P."/>
            <person name="Chao Q."/>
            <person name="Choy N."/>
            <person name="Enju A."/>
            <person name="Goldsmith A.D."/>
            <person name="Gurjal M."/>
            <person name="Hansen N.F."/>
            <person name="Hayashizaki Y."/>
            <person name="Johnson-Hopson C."/>
            <person name="Hsuan V.W."/>
            <person name="Iida K."/>
            <person name="Karnes M."/>
            <person name="Khan S."/>
            <person name="Koesema E."/>
            <person name="Ishida J."/>
            <person name="Jiang P.X."/>
            <person name="Jones T."/>
            <person name="Kawai J."/>
            <person name="Kamiya A."/>
            <person name="Meyers C."/>
            <person name="Nakajima M."/>
            <person name="Narusaka M."/>
            <person name="Seki M."/>
            <person name="Sakurai T."/>
            <person name="Satou M."/>
            <person name="Tamse R."/>
            <person name="Vaysberg M."/>
            <person name="Wallender E.K."/>
            <person name="Wong C."/>
            <person name="Yamamura Y."/>
            <person name="Yuan S."/>
            <person name="Shinozaki K."/>
            <person name="Davis R.W."/>
            <person name="Theologis A."/>
            <person name="Ecker J.R."/>
        </authorList>
    </citation>
    <scope>NUCLEOTIDE SEQUENCE [LARGE SCALE MRNA] (ISOFORM 1)</scope>
    <source>
        <strain>cv. Columbia</strain>
    </source>
</reference>
<reference key="4">
    <citation type="submission" date="2005-03" db="EMBL/GenBank/DDBJ databases">
        <title>Large-scale analysis of RIKEN Arabidopsis full-length (RAFL) cDNAs.</title>
        <authorList>
            <person name="Totoki Y."/>
            <person name="Seki M."/>
            <person name="Ishida J."/>
            <person name="Nakajima M."/>
            <person name="Enju A."/>
            <person name="Kamiya A."/>
            <person name="Narusaka M."/>
            <person name="Shin-i T."/>
            <person name="Nakagawa M."/>
            <person name="Sakamoto N."/>
            <person name="Oishi K."/>
            <person name="Kohara Y."/>
            <person name="Kobayashi M."/>
            <person name="Toyoda A."/>
            <person name="Sakaki Y."/>
            <person name="Sakurai T."/>
            <person name="Iida K."/>
            <person name="Akiyama K."/>
            <person name="Satou M."/>
            <person name="Toyoda T."/>
            <person name="Konagaya A."/>
            <person name="Carninci P."/>
            <person name="Kawai J."/>
            <person name="Hayashizaki Y."/>
            <person name="Shinozaki K."/>
        </authorList>
    </citation>
    <scope>NUCLEOTIDE SEQUENCE [LARGE SCALE MRNA] (ISOFORM 1)</scope>
    <source>
        <strain>cv. Columbia</strain>
    </source>
</reference>
<reference key="5">
    <citation type="journal article" date="2004" name="Plant Physiol.">
        <title>Arabidopsis FHY3/FAR1 gene family and distinct roles of its members in light control of Arabidopsis development.</title>
        <authorList>
            <person name="Lin R."/>
            <person name="Wang H."/>
        </authorList>
    </citation>
    <scope>TISSUE SPECIFICITY</scope>
    <scope>INDUCTION</scope>
    <scope>SUBCELLULAR LOCATION</scope>
    <scope>GENE FAMILY</scope>
    <scope>NOMENCLATURE</scope>
</reference>
<feature type="chain" id="PRO_0000363482" description="Protein FAR1-RELATED SEQUENCE 4">
    <location>
        <begin position="1"/>
        <end position="732"/>
    </location>
</feature>
<feature type="domain" description="FAR1">
    <location>
        <begin position="11"/>
        <end position="97"/>
    </location>
</feature>
<feature type="domain" description="MULE">
    <location>
        <begin position="212"/>
        <end position="308"/>
    </location>
</feature>
<feature type="zinc finger region" description="SWIM-type" evidence="1">
    <location>
        <begin position="490"/>
        <end position="526"/>
    </location>
</feature>
<feature type="region of interest" description="Disordered" evidence="2">
    <location>
        <begin position="623"/>
        <end position="683"/>
    </location>
</feature>
<feature type="compositionally biased region" description="Polar residues" evidence="2">
    <location>
        <begin position="624"/>
        <end position="635"/>
    </location>
</feature>
<feature type="splice variant" id="VSP_036310" description="In isoform 2." evidence="4">
    <location>
        <begin position="666"/>
        <end position="667"/>
    </location>
</feature>
<feature type="sequence conflict" description="In Ref. 3; AAQ62876 and 4; BAD94369." evidence="4" ref="3 4">
    <original>I</original>
    <variation>V</variation>
    <location>
        <position position="586"/>
    </location>
</feature>
<accession>Q6NQJ7</accession>
<accession>F4I2C4</accession>
<accession>Q2V4C5</accession>
<accession>Q9SFW7</accession>
<accession>Q9SGQ3</accession>
<protein>
    <recommendedName>
        <fullName>Protein FAR1-RELATED SEQUENCE 4</fullName>
    </recommendedName>
</protein>
<evidence type="ECO:0000255" key="1">
    <source>
        <dbReference type="PROSITE-ProRule" id="PRU00325"/>
    </source>
</evidence>
<evidence type="ECO:0000256" key="2">
    <source>
        <dbReference type="SAM" id="MobiDB-lite"/>
    </source>
</evidence>
<evidence type="ECO:0000269" key="3">
    <source>
    </source>
</evidence>
<evidence type="ECO:0000305" key="4"/>
<keyword id="KW-0025">Alternative splicing</keyword>
<keyword id="KW-0479">Metal-binding</keyword>
<keyword id="KW-0539">Nucleus</keyword>
<keyword id="KW-1185">Reference proteome</keyword>
<keyword id="KW-0862">Zinc</keyword>
<keyword id="KW-0863">Zinc-finger</keyword>
<dbReference type="EMBL" id="AC009978">
    <property type="protein sequence ID" value="AAF17632.1"/>
    <property type="molecule type" value="Genomic_DNA"/>
</dbReference>
<dbReference type="EMBL" id="AC012394">
    <property type="protein sequence ID" value="AAF16668.1"/>
    <property type="status" value="ALT_SEQ"/>
    <property type="molecule type" value="Genomic_DNA"/>
</dbReference>
<dbReference type="EMBL" id="CP002684">
    <property type="protein sequence ID" value="AEE35824.1"/>
    <property type="molecule type" value="Genomic_DNA"/>
</dbReference>
<dbReference type="EMBL" id="CP002684">
    <property type="protein sequence ID" value="AEE35825.1"/>
    <property type="molecule type" value="Genomic_DNA"/>
</dbReference>
<dbReference type="EMBL" id="CP002684">
    <property type="protein sequence ID" value="ANM58378.1"/>
    <property type="molecule type" value="Genomic_DNA"/>
</dbReference>
<dbReference type="EMBL" id="BT010456">
    <property type="protein sequence ID" value="AAQ62876.1"/>
    <property type="molecule type" value="mRNA"/>
</dbReference>
<dbReference type="EMBL" id="AK221406">
    <property type="protein sequence ID" value="BAD94369.1"/>
    <property type="molecule type" value="mRNA"/>
</dbReference>
<dbReference type="PIR" id="G96790">
    <property type="entry name" value="G96790"/>
</dbReference>
<dbReference type="RefSeq" id="NP_001031286.1">
    <molecule id="Q6NQJ7-2"/>
    <property type="nucleotide sequence ID" value="NM_001036209.2"/>
</dbReference>
<dbReference type="RefSeq" id="NP_001320820.1">
    <property type="nucleotide sequence ID" value="NM_001334722.1"/>
</dbReference>
<dbReference type="RefSeq" id="NP_001320821.1">
    <molecule id="Q6NQJ7-1"/>
    <property type="nucleotide sequence ID" value="NM_001334723.1"/>
</dbReference>
<dbReference type="RefSeq" id="NP_177759.1">
    <molecule id="Q6NQJ7-1"/>
    <property type="nucleotide sequence ID" value="NM_106282.5"/>
</dbReference>
<dbReference type="BioGRID" id="29184">
    <property type="interactions" value="4"/>
</dbReference>
<dbReference type="FunCoup" id="Q6NQJ7">
    <property type="interactions" value="1087"/>
</dbReference>
<dbReference type="IntAct" id="Q6NQJ7">
    <property type="interactions" value="4"/>
</dbReference>
<dbReference type="STRING" id="3702.Q6NQJ7"/>
<dbReference type="iPTMnet" id="Q6NQJ7"/>
<dbReference type="PaxDb" id="3702-AT1G76320.1"/>
<dbReference type="ProteomicsDB" id="247378">
    <molecule id="Q6NQJ7-1"/>
</dbReference>
<dbReference type="EnsemblPlants" id="AT1G76320.1">
    <molecule id="Q6NQJ7-1"/>
    <property type="protein sequence ID" value="AT1G76320.1"/>
    <property type="gene ID" value="AT1G76320"/>
</dbReference>
<dbReference type="EnsemblPlants" id="AT1G76320.2">
    <molecule id="Q6NQJ7-2"/>
    <property type="protein sequence ID" value="AT1G76320.2"/>
    <property type="gene ID" value="AT1G76320"/>
</dbReference>
<dbReference type="EnsemblPlants" id="AT1G76320.4">
    <molecule id="Q6NQJ7-1"/>
    <property type="protein sequence ID" value="AT1G76320.4"/>
    <property type="gene ID" value="AT1G76320"/>
</dbReference>
<dbReference type="GeneID" id="843965"/>
<dbReference type="Gramene" id="AT1G76320.1">
    <molecule id="Q6NQJ7-1"/>
    <property type="protein sequence ID" value="AT1G76320.1"/>
    <property type="gene ID" value="AT1G76320"/>
</dbReference>
<dbReference type="Gramene" id="AT1G76320.2">
    <molecule id="Q6NQJ7-2"/>
    <property type="protein sequence ID" value="AT1G76320.2"/>
    <property type="gene ID" value="AT1G76320"/>
</dbReference>
<dbReference type="Gramene" id="AT1G76320.4">
    <molecule id="Q6NQJ7-1"/>
    <property type="protein sequence ID" value="AT1G76320.4"/>
    <property type="gene ID" value="AT1G76320"/>
</dbReference>
<dbReference type="KEGG" id="ath:AT1G76320"/>
<dbReference type="Araport" id="AT1G76320"/>
<dbReference type="TAIR" id="AT1G76320">
    <property type="gene designation" value="FRS4"/>
</dbReference>
<dbReference type="eggNOG" id="ENOG502QQDK">
    <property type="taxonomic scope" value="Eukaryota"/>
</dbReference>
<dbReference type="InParanoid" id="Q6NQJ7"/>
<dbReference type="OrthoDB" id="742364at2759"/>
<dbReference type="PRO" id="PR:Q6NQJ7"/>
<dbReference type="Proteomes" id="UP000006548">
    <property type="component" value="Chromosome 1"/>
</dbReference>
<dbReference type="ExpressionAtlas" id="Q6NQJ7">
    <property type="expression patterns" value="baseline and differential"/>
</dbReference>
<dbReference type="GO" id="GO:0005634">
    <property type="term" value="C:nucleus"/>
    <property type="evidence" value="ECO:0007669"/>
    <property type="project" value="UniProtKB-SubCell"/>
</dbReference>
<dbReference type="GO" id="GO:0008270">
    <property type="term" value="F:zinc ion binding"/>
    <property type="evidence" value="ECO:0007669"/>
    <property type="project" value="UniProtKB-KW"/>
</dbReference>
<dbReference type="GO" id="GO:0006355">
    <property type="term" value="P:regulation of DNA-templated transcription"/>
    <property type="evidence" value="ECO:0007669"/>
    <property type="project" value="InterPro"/>
</dbReference>
<dbReference type="InterPro" id="IPR004330">
    <property type="entry name" value="FAR1_DNA_bnd_dom"/>
</dbReference>
<dbReference type="InterPro" id="IPR031052">
    <property type="entry name" value="FHY3/FAR1"/>
</dbReference>
<dbReference type="InterPro" id="IPR018289">
    <property type="entry name" value="MULE_transposase_dom"/>
</dbReference>
<dbReference type="InterPro" id="IPR006564">
    <property type="entry name" value="Znf_PMZ"/>
</dbReference>
<dbReference type="InterPro" id="IPR007527">
    <property type="entry name" value="Znf_SWIM"/>
</dbReference>
<dbReference type="PANTHER" id="PTHR31669">
    <property type="entry name" value="PROTEIN FAR1-RELATED SEQUENCE 10-RELATED"/>
    <property type="match status" value="1"/>
</dbReference>
<dbReference type="PANTHER" id="PTHR31669:SF42">
    <property type="entry name" value="PROTEIN FAR1-RELATED SEQUENCE 4"/>
    <property type="match status" value="1"/>
</dbReference>
<dbReference type="Pfam" id="PF03101">
    <property type="entry name" value="FAR1"/>
    <property type="match status" value="1"/>
</dbReference>
<dbReference type="Pfam" id="PF10551">
    <property type="entry name" value="MULE"/>
    <property type="match status" value="1"/>
</dbReference>
<dbReference type="Pfam" id="PF04434">
    <property type="entry name" value="SWIM"/>
    <property type="match status" value="1"/>
</dbReference>
<dbReference type="SMART" id="SM00575">
    <property type="entry name" value="ZnF_PMZ"/>
    <property type="match status" value="1"/>
</dbReference>
<dbReference type="PROSITE" id="PS50966">
    <property type="entry name" value="ZF_SWIM"/>
    <property type="match status" value="1"/>
</dbReference>
<proteinExistence type="evidence at transcript level"/>
<comment type="function">
    <text>Putative transcription activator involved in regulating light control of development.</text>
</comment>
<comment type="subcellular location">
    <subcellularLocation>
        <location evidence="3">Nucleus</location>
    </subcellularLocation>
    <text>The nuclear localization is independent of the light treatment.</text>
</comment>
<comment type="alternative products">
    <event type="alternative splicing"/>
    <isoform>
        <id>Q6NQJ7-1</id>
        <name>1</name>
        <sequence type="displayed"/>
    </isoform>
    <isoform>
        <id>Q6NQJ7-2</id>
        <name>2</name>
        <sequence type="described" ref="VSP_036310"/>
    </isoform>
</comment>
<comment type="tissue specificity">
    <text evidence="3">Expressed in hypocotyls, rosette and cauline leaves, inflorescences stems, flowers and siliques.</text>
</comment>
<comment type="induction">
    <text evidence="3">Up-regulated in hypocotyls by far-red light treatment.</text>
</comment>
<comment type="similarity">
    <text evidence="4">Belongs to the FHY3/FAR1 family.</text>
</comment>
<comment type="sequence caution" evidence="4">
    <conflict type="erroneous gene model prediction">
        <sequence resource="EMBL-CDS" id="AAF16668"/>
    </conflict>
</comment>